<proteinExistence type="inferred from homology"/>
<organism>
    <name type="scientific">Caulobacter vibrioides (strain ATCC 19089 / CIP 103742 / CB 15)</name>
    <name type="common">Caulobacter crescentus</name>
    <dbReference type="NCBI Taxonomy" id="190650"/>
    <lineage>
        <taxon>Bacteria</taxon>
        <taxon>Pseudomonadati</taxon>
        <taxon>Pseudomonadota</taxon>
        <taxon>Alphaproteobacteria</taxon>
        <taxon>Caulobacterales</taxon>
        <taxon>Caulobacteraceae</taxon>
        <taxon>Caulobacter</taxon>
    </lineage>
</organism>
<comment type="function">
    <text evidence="1">Exhibits a very high intrinsic GTPase hydrolysis rate. Involved in the addition of a carboxymethylaminomethyl (cmnm) group at the wobble position (U34) of certain tRNAs, forming tRNA-cmnm(5)s(2)U34.</text>
</comment>
<comment type="cofactor">
    <cofactor evidence="1">
        <name>K(+)</name>
        <dbReference type="ChEBI" id="CHEBI:29103"/>
    </cofactor>
    <text evidence="1">Binds 1 potassium ion per subunit.</text>
</comment>
<comment type="subunit">
    <text evidence="1">Homodimer. Heterotetramer of two MnmE and two MnmG subunits.</text>
</comment>
<comment type="subcellular location">
    <subcellularLocation>
        <location evidence="1">Cytoplasm</location>
    </subcellularLocation>
</comment>
<comment type="similarity">
    <text evidence="1">Belongs to the TRAFAC class TrmE-Era-EngA-EngB-Septin-like GTPase superfamily. TrmE GTPase family.</text>
</comment>
<feature type="chain" id="PRO_0000188862" description="tRNA modification GTPase MnmE">
    <location>
        <begin position="1"/>
        <end position="446"/>
    </location>
</feature>
<feature type="domain" description="TrmE-type G">
    <location>
        <begin position="212"/>
        <end position="370"/>
    </location>
</feature>
<feature type="binding site" evidence="1">
    <location>
        <position position="21"/>
    </location>
    <ligand>
        <name>(6S)-5-formyl-5,6,7,8-tetrahydrofolate</name>
        <dbReference type="ChEBI" id="CHEBI:57457"/>
    </ligand>
</feature>
<feature type="binding site" evidence="1">
    <location>
        <position position="77"/>
    </location>
    <ligand>
        <name>(6S)-5-formyl-5,6,7,8-tetrahydrofolate</name>
        <dbReference type="ChEBI" id="CHEBI:57457"/>
    </ligand>
</feature>
<feature type="binding site" evidence="1">
    <location>
        <position position="116"/>
    </location>
    <ligand>
        <name>(6S)-5-formyl-5,6,7,8-tetrahydrofolate</name>
        <dbReference type="ChEBI" id="CHEBI:57457"/>
    </ligand>
</feature>
<feature type="binding site" evidence="1">
    <location>
        <begin position="222"/>
        <end position="227"/>
    </location>
    <ligand>
        <name>GTP</name>
        <dbReference type="ChEBI" id="CHEBI:37565"/>
    </ligand>
</feature>
<feature type="binding site" evidence="1">
    <location>
        <position position="222"/>
    </location>
    <ligand>
        <name>K(+)</name>
        <dbReference type="ChEBI" id="CHEBI:29103"/>
    </ligand>
</feature>
<feature type="binding site" evidence="1">
    <location>
        <position position="226"/>
    </location>
    <ligand>
        <name>Mg(2+)</name>
        <dbReference type="ChEBI" id="CHEBI:18420"/>
    </ligand>
</feature>
<feature type="binding site" evidence="1">
    <location>
        <begin position="241"/>
        <end position="247"/>
    </location>
    <ligand>
        <name>GTP</name>
        <dbReference type="ChEBI" id="CHEBI:37565"/>
    </ligand>
</feature>
<feature type="binding site" evidence="1">
    <location>
        <position position="241"/>
    </location>
    <ligand>
        <name>K(+)</name>
        <dbReference type="ChEBI" id="CHEBI:29103"/>
    </ligand>
</feature>
<feature type="binding site" evidence="1">
    <location>
        <position position="243"/>
    </location>
    <ligand>
        <name>K(+)</name>
        <dbReference type="ChEBI" id="CHEBI:29103"/>
    </ligand>
</feature>
<feature type="binding site" evidence="1">
    <location>
        <position position="246"/>
    </location>
    <ligand>
        <name>K(+)</name>
        <dbReference type="ChEBI" id="CHEBI:29103"/>
    </ligand>
</feature>
<feature type="binding site" evidence="1">
    <location>
        <position position="247"/>
    </location>
    <ligand>
        <name>Mg(2+)</name>
        <dbReference type="ChEBI" id="CHEBI:18420"/>
    </ligand>
</feature>
<feature type="binding site" evidence="1">
    <location>
        <begin position="266"/>
        <end position="269"/>
    </location>
    <ligand>
        <name>GTP</name>
        <dbReference type="ChEBI" id="CHEBI:37565"/>
    </ligand>
</feature>
<feature type="binding site" evidence="1">
    <location>
        <position position="446"/>
    </location>
    <ligand>
        <name>(6S)-5-formyl-5,6,7,8-tetrahydrofolate</name>
        <dbReference type="ChEBI" id="CHEBI:57457"/>
    </ligand>
</feature>
<gene>
    <name evidence="1" type="primary">mnmE</name>
    <name type="synonym">ogt</name>
    <name evidence="1" type="synonym">thdF</name>
    <name evidence="1" type="synonym">trmE</name>
    <name type="ordered locus">CC_3756</name>
</gene>
<reference key="1">
    <citation type="journal article" date="2001" name="Proc. Natl. Acad. Sci. U.S.A.">
        <title>Complete genome sequence of Caulobacter crescentus.</title>
        <authorList>
            <person name="Nierman W.C."/>
            <person name="Feldblyum T.V."/>
            <person name="Laub M.T."/>
            <person name="Paulsen I.T."/>
            <person name="Nelson K.E."/>
            <person name="Eisen J.A."/>
            <person name="Heidelberg J.F."/>
            <person name="Alley M.R.K."/>
            <person name="Ohta N."/>
            <person name="Maddock J.R."/>
            <person name="Potocka I."/>
            <person name="Nelson W.C."/>
            <person name="Newton A."/>
            <person name="Stephens C."/>
            <person name="Phadke N.D."/>
            <person name="Ely B."/>
            <person name="DeBoy R.T."/>
            <person name="Dodson R.J."/>
            <person name="Durkin A.S."/>
            <person name="Gwinn M.L."/>
            <person name="Haft D.H."/>
            <person name="Kolonay J.F."/>
            <person name="Smit J."/>
            <person name="Craven M.B."/>
            <person name="Khouri H.M."/>
            <person name="Shetty J."/>
            <person name="Berry K.J."/>
            <person name="Utterback T.R."/>
            <person name="Tran K."/>
            <person name="Wolf A.M."/>
            <person name="Vamathevan J.J."/>
            <person name="Ermolaeva M.D."/>
            <person name="White O."/>
            <person name="Salzberg S.L."/>
            <person name="Venter J.C."/>
            <person name="Shapiro L."/>
            <person name="Fraser C.M."/>
        </authorList>
    </citation>
    <scope>NUCLEOTIDE SEQUENCE [LARGE SCALE GENOMIC DNA]</scope>
    <source>
        <strain>ATCC 19089 / CIP 103742 / CB 15</strain>
    </source>
</reference>
<accession>P0CAX2</accession>
<accession>Q9XBF9</accession>
<sequence length="446" mass="47394">MTDTIFALATAAGRSAVAVVRVSGPRSSEIAAALCGRLPSPRLASVRTLKHNGVALDAALVLRFEKPASYTGEDSVEFHVHGGRAVVEALLAALSELGARLAEAGEFTRRAFENGKLDLAQAEGVADLIDAETEAQRRQALGQVGGALSQRYDRWRDLLVQALAMLEAAVDFPDEDLPEEVAERARPGLRQLSAELNAALADVSRGRRVRDGFRIALIGAPNAGKSTLLNGLAERDAAIVTDVAGTTRDVIEVPLVLGGYKVLVADTAGIRETADVIEAEGVRRAKAWAEAADLRLWVVDGFHVKQADARPEAIRVGDWLILNKTDIADADASAHVAERWAGEGLTVLHIAGTSAEGPEALRAALASHVADALSGAEFPAATRLRHAERLSEARSYLERALSDVGLEVELAAEDVRLAARALERISGRIDPEDVLGRVFSTFCIGK</sequence>
<protein>
    <recommendedName>
        <fullName evidence="1">tRNA modification GTPase MnmE</fullName>
        <ecNumber evidence="1">3.6.-.-</ecNumber>
    </recommendedName>
</protein>
<keyword id="KW-0963">Cytoplasm</keyword>
<keyword id="KW-0342">GTP-binding</keyword>
<keyword id="KW-0378">Hydrolase</keyword>
<keyword id="KW-0460">Magnesium</keyword>
<keyword id="KW-0479">Metal-binding</keyword>
<keyword id="KW-0547">Nucleotide-binding</keyword>
<keyword id="KW-0630">Potassium</keyword>
<keyword id="KW-1185">Reference proteome</keyword>
<keyword id="KW-0819">tRNA processing</keyword>
<dbReference type="EC" id="3.6.-.-" evidence="1"/>
<dbReference type="EMBL" id="AE005673">
    <property type="protein sequence ID" value="AAK25718.1"/>
    <property type="molecule type" value="Genomic_DNA"/>
</dbReference>
<dbReference type="PIR" id="B87715">
    <property type="entry name" value="B87715"/>
</dbReference>
<dbReference type="RefSeq" id="NP_422550.1">
    <property type="nucleotide sequence ID" value="NC_002696.2"/>
</dbReference>
<dbReference type="SMR" id="P0CAX2"/>
<dbReference type="STRING" id="190650.CC_3756"/>
<dbReference type="EnsemblBacteria" id="AAK25718">
    <property type="protein sequence ID" value="AAK25718"/>
    <property type="gene ID" value="CC_3756"/>
</dbReference>
<dbReference type="KEGG" id="ccr:CC_3756"/>
<dbReference type="PATRIC" id="fig|190650.5.peg.3758"/>
<dbReference type="eggNOG" id="COG0486">
    <property type="taxonomic scope" value="Bacteria"/>
</dbReference>
<dbReference type="HOGENOM" id="CLU_019624_3_1_5"/>
<dbReference type="BioCyc" id="CAULO:CC3756-MONOMER"/>
<dbReference type="Proteomes" id="UP000001816">
    <property type="component" value="Chromosome"/>
</dbReference>
<dbReference type="GO" id="GO:0005737">
    <property type="term" value="C:cytoplasm"/>
    <property type="evidence" value="ECO:0007669"/>
    <property type="project" value="UniProtKB-SubCell"/>
</dbReference>
<dbReference type="GO" id="GO:0005525">
    <property type="term" value="F:GTP binding"/>
    <property type="evidence" value="ECO:0007669"/>
    <property type="project" value="UniProtKB-UniRule"/>
</dbReference>
<dbReference type="GO" id="GO:0003924">
    <property type="term" value="F:GTPase activity"/>
    <property type="evidence" value="ECO:0007669"/>
    <property type="project" value="UniProtKB-UniRule"/>
</dbReference>
<dbReference type="GO" id="GO:0046872">
    <property type="term" value="F:metal ion binding"/>
    <property type="evidence" value="ECO:0007669"/>
    <property type="project" value="UniProtKB-KW"/>
</dbReference>
<dbReference type="GO" id="GO:0030488">
    <property type="term" value="P:tRNA methylation"/>
    <property type="evidence" value="ECO:0007669"/>
    <property type="project" value="TreeGrafter"/>
</dbReference>
<dbReference type="GO" id="GO:0002098">
    <property type="term" value="P:tRNA wobble uridine modification"/>
    <property type="evidence" value="ECO:0007669"/>
    <property type="project" value="TreeGrafter"/>
</dbReference>
<dbReference type="CDD" id="cd04164">
    <property type="entry name" value="trmE"/>
    <property type="match status" value="1"/>
</dbReference>
<dbReference type="CDD" id="cd14858">
    <property type="entry name" value="TrmE_N"/>
    <property type="match status" value="1"/>
</dbReference>
<dbReference type="FunFam" id="3.30.1360.120:FF:000007">
    <property type="entry name" value="tRNA modification GTPase GTPBP3, mitochondrial"/>
    <property type="match status" value="1"/>
</dbReference>
<dbReference type="Gene3D" id="3.40.50.300">
    <property type="entry name" value="P-loop containing nucleotide triphosphate hydrolases"/>
    <property type="match status" value="1"/>
</dbReference>
<dbReference type="Gene3D" id="3.30.1360.120">
    <property type="entry name" value="Probable tRNA modification gtpase trme, domain 1"/>
    <property type="match status" value="1"/>
</dbReference>
<dbReference type="Gene3D" id="1.20.120.430">
    <property type="entry name" value="tRNA modification GTPase MnmE domain 2"/>
    <property type="match status" value="1"/>
</dbReference>
<dbReference type="HAMAP" id="MF_00379">
    <property type="entry name" value="GTPase_MnmE"/>
    <property type="match status" value="1"/>
</dbReference>
<dbReference type="InterPro" id="IPR031168">
    <property type="entry name" value="G_TrmE"/>
</dbReference>
<dbReference type="InterPro" id="IPR006073">
    <property type="entry name" value="GTP-bd"/>
</dbReference>
<dbReference type="InterPro" id="IPR018948">
    <property type="entry name" value="GTP-bd_TrmE_N"/>
</dbReference>
<dbReference type="InterPro" id="IPR004520">
    <property type="entry name" value="GTPase_MnmE"/>
</dbReference>
<dbReference type="InterPro" id="IPR027368">
    <property type="entry name" value="MnmE_dom2"/>
</dbReference>
<dbReference type="InterPro" id="IPR025867">
    <property type="entry name" value="MnmE_helical"/>
</dbReference>
<dbReference type="InterPro" id="IPR027417">
    <property type="entry name" value="P-loop_NTPase"/>
</dbReference>
<dbReference type="InterPro" id="IPR005225">
    <property type="entry name" value="Small_GTP-bd"/>
</dbReference>
<dbReference type="InterPro" id="IPR027266">
    <property type="entry name" value="TrmE/GcvT_dom1"/>
</dbReference>
<dbReference type="NCBIfam" id="TIGR00450">
    <property type="entry name" value="mnmE_trmE_thdF"/>
    <property type="match status" value="1"/>
</dbReference>
<dbReference type="NCBIfam" id="NF003661">
    <property type="entry name" value="PRK05291.1-3"/>
    <property type="match status" value="1"/>
</dbReference>
<dbReference type="NCBIfam" id="TIGR00231">
    <property type="entry name" value="small_GTP"/>
    <property type="match status" value="1"/>
</dbReference>
<dbReference type="PANTHER" id="PTHR42714">
    <property type="entry name" value="TRNA MODIFICATION GTPASE GTPBP3"/>
    <property type="match status" value="1"/>
</dbReference>
<dbReference type="PANTHER" id="PTHR42714:SF2">
    <property type="entry name" value="TRNA MODIFICATION GTPASE GTPBP3, MITOCHONDRIAL"/>
    <property type="match status" value="1"/>
</dbReference>
<dbReference type="Pfam" id="PF01926">
    <property type="entry name" value="MMR_HSR1"/>
    <property type="match status" value="1"/>
</dbReference>
<dbReference type="Pfam" id="PF12631">
    <property type="entry name" value="MnmE_helical"/>
    <property type="match status" value="1"/>
</dbReference>
<dbReference type="Pfam" id="PF10396">
    <property type="entry name" value="TrmE_N"/>
    <property type="match status" value="1"/>
</dbReference>
<dbReference type="PRINTS" id="PR00326">
    <property type="entry name" value="GTP1OBG"/>
</dbReference>
<dbReference type="SUPFAM" id="SSF52540">
    <property type="entry name" value="P-loop containing nucleoside triphosphate hydrolases"/>
    <property type="match status" value="1"/>
</dbReference>
<dbReference type="SUPFAM" id="SSF116878">
    <property type="entry name" value="TrmE connector domain"/>
    <property type="match status" value="1"/>
</dbReference>
<dbReference type="PROSITE" id="PS51709">
    <property type="entry name" value="G_TRME"/>
    <property type="match status" value="1"/>
</dbReference>
<name>MNME_CAUVC</name>
<evidence type="ECO:0000255" key="1">
    <source>
        <dbReference type="HAMAP-Rule" id="MF_00379"/>
    </source>
</evidence>